<gene>
    <name evidence="34" type="primary">CAP1</name>
    <name type="ordered locus">CAALFM_C302220WA</name>
    <name type="ORF">CaO19.1623</name>
    <name type="ORF">CaO19.9191</name>
</gene>
<dbReference type="EMBL" id="CP017625">
    <property type="protein sequence ID" value="AOW28259.1"/>
    <property type="molecule type" value="Genomic_DNA"/>
</dbReference>
<dbReference type="RefSeq" id="XP_721702.2">
    <property type="nucleotide sequence ID" value="XM_716609.2"/>
</dbReference>
<dbReference type="SMR" id="Q5AJU7"/>
<dbReference type="FunCoup" id="Q5AJU7">
    <property type="interactions" value="3573"/>
</dbReference>
<dbReference type="STRING" id="237561.Q5AJU7"/>
<dbReference type="EnsemblFungi" id="C3_02220W_A-T">
    <property type="protein sequence ID" value="C3_02220W_A-T-p1"/>
    <property type="gene ID" value="C3_02220W_A"/>
</dbReference>
<dbReference type="GeneID" id="3636640"/>
<dbReference type="KEGG" id="cal:CAALFM_C302220WA"/>
<dbReference type="CGD" id="CAL0000176112">
    <property type="gene designation" value="CAP1"/>
</dbReference>
<dbReference type="VEuPathDB" id="FungiDB:C3_02220W_A"/>
<dbReference type="eggNOG" id="ENOG502RPD7">
    <property type="taxonomic scope" value="Eukaryota"/>
</dbReference>
<dbReference type="HOGENOM" id="CLU_032750_0_0_1"/>
<dbReference type="InParanoid" id="Q5AJU7"/>
<dbReference type="OMA" id="VSTFCAK"/>
<dbReference type="OrthoDB" id="5380163at2759"/>
<dbReference type="PHI-base" id="PHI:123271"/>
<dbReference type="PHI-base" id="PHI:3805"/>
<dbReference type="PRO" id="PR:Q5AJU7"/>
<dbReference type="Proteomes" id="UP000000559">
    <property type="component" value="Chromosome 3"/>
</dbReference>
<dbReference type="GO" id="GO:0005737">
    <property type="term" value="C:cytoplasm"/>
    <property type="evidence" value="ECO:0000314"/>
    <property type="project" value="CGD"/>
</dbReference>
<dbReference type="GO" id="GO:0005634">
    <property type="term" value="C:nucleus"/>
    <property type="evidence" value="ECO:0000314"/>
    <property type="project" value="CGD"/>
</dbReference>
<dbReference type="GO" id="GO:0090575">
    <property type="term" value="C:RNA polymerase II transcription regulator complex"/>
    <property type="evidence" value="ECO:0000318"/>
    <property type="project" value="GO_Central"/>
</dbReference>
<dbReference type="GO" id="GO:0001228">
    <property type="term" value="F:DNA-binding transcription activator activity, RNA polymerase II-specific"/>
    <property type="evidence" value="ECO:0000318"/>
    <property type="project" value="GO_Central"/>
</dbReference>
<dbReference type="GO" id="GO:0003700">
    <property type="term" value="F:DNA-binding transcription factor activity"/>
    <property type="evidence" value="ECO:0000266"/>
    <property type="project" value="CGD"/>
</dbReference>
<dbReference type="GO" id="GO:0000976">
    <property type="term" value="F:transcription cis-regulatory region binding"/>
    <property type="evidence" value="ECO:0000318"/>
    <property type="project" value="GO_Central"/>
</dbReference>
<dbReference type="GO" id="GO:0006915">
    <property type="term" value="P:apoptotic process"/>
    <property type="evidence" value="ECO:0000315"/>
    <property type="project" value="CGD"/>
</dbReference>
<dbReference type="GO" id="GO:0071276">
    <property type="term" value="P:cellular response to cadmium ion"/>
    <property type="evidence" value="ECO:0000315"/>
    <property type="project" value="CGD"/>
</dbReference>
<dbReference type="GO" id="GO:0034599">
    <property type="term" value="P:cellular response to oxidative stress"/>
    <property type="evidence" value="ECO:0000315"/>
    <property type="project" value="CGD"/>
</dbReference>
<dbReference type="GO" id="GO:0034614">
    <property type="term" value="P:cellular response to reactive oxygen species"/>
    <property type="evidence" value="ECO:0000314"/>
    <property type="project" value="CGD"/>
</dbReference>
<dbReference type="GO" id="GO:0034440">
    <property type="term" value="P:lipid oxidation"/>
    <property type="evidence" value="ECO:0000315"/>
    <property type="project" value="CGD"/>
</dbReference>
<dbReference type="GO" id="GO:0006355">
    <property type="term" value="P:regulation of DNA-templated transcription"/>
    <property type="evidence" value="ECO:0000315"/>
    <property type="project" value="CGD"/>
</dbReference>
<dbReference type="GO" id="GO:0006357">
    <property type="term" value="P:regulation of transcription by RNA polymerase II"/>
    <property type="evidence" value="ECO:0000315"/>
    <property type="project" value="CGD"/>
</dbReference>
<dbReference type="GO" id="GO:0042783">
    <property type="term" value="P:symbiont-mediated evasion of host immune response"/>
    <property type="evidence" value="ECO:0000315"/>
    <property type="project" value="CGD"/>
</dbReference>
<dbReference type="CDD" id="cd14688">
    <property type="entry name" value="bZIP_YAP"/>
    <property type="match status" value="1"/>
</dbReference>
<dbReference type="FunFam" id="1.10.238.100:FF:000002">
    <property type="entry name" value="AP-1-like transcription factor"/>
    <property type="match status" value="1"/>
</dbReference>
<dbReference type="FunFam" id="1.20.5.170:FF:000067">
    <property type="entry name" value="BZIP transcription factor"/>
    <property type="match status" value="1"/>
</dbReference>
<dbReference type="Gene3D" id="1.20.5.170">
    <property type="match status" value="1"/>
</dbReference>
<dbReference type="Gene3D" id="1.10.238.100">
    <property type="entry name" value="YAP1 redox domain. Chain B"/>
    <property type="match status" value="1"/>
</dbReference>
<dbReference type="InterPro" id="IPR050936">
    <property type="entry name" value="AP-1-like"/>
</dbReference>
<dbReference type="InterPro" id="IPR004827">
    <property type="entry name" value="bZIP"/>
</dbReference>
<dbReference type="InterPro" id="IPR046347">
    <property type="entry name" value="bZIP_sf"/>
</dbReference>
<dbReference type="InterPro" id="IPR013910">
    <property type="entry name" value="TF_PAP1"/>
</dbReference>
<dbReference type="InterPro" id="IPR023167">
    <property type="entry name" value="Yap1_redox_dom_sf"/>
</dbReference>
<dbReference type="PANTHER" id="PTHR40621:SF6">
    <property type="entry name" value="AP-1-LIKE TRANSCRIPTION FACTOR YAP1-RELATED"/>
    <property type="match status" value="1"/>
</dbReference>
<dbReference type="PANTHER" id="PTHR40621">
    <property type="entry name" value="TRANSCRIPTION FACTOR KAPC-RELATED"/>
    <property type="match status" value="1"/>
</dbReference>
<dbReference type="Pfam" id="PF00170">
    <property type="entry name" value="bZIP_1"/>
    <property type="match status" value="1"/>
</dbReference>
<dbReference type="Pfam" id="PF08601">
    <property type="entry name" value="PAP1"/>
    <property type="match status" value="1"/>
</dbReference>
<dbReference type="SMART" id="SM00338">
    <property type="entry name" value="BRLZ"/>
    <property type="match status" value="1"/>
</dbReference>
<dbReference type="SUPFAM" id="SSF57959">
    <property type="entry name" value="Leucine zipper domain"/>
    <property type="match status" value="1"/>
</dbReference>
<dbReference type="SUPFAM" id="SSF111430">
    <property type="entry name" value="YAP1 redox domain"/>
    <property type="match status" value="1"/>
</dbReference>
<dbReference type="PROSITE" id="PS50217">
    <property type="entry name" value="BZIP"/>
    <property type="match status" value="1"/>
</dbReference>
<dbReference type="PROSITE" id="PS00036">
    <property type="entry name" value="BZIP_BASIC"/>
    <property type="match status" value="1"/>
</dbReference>
<proteinExistence type="evidence at protein level"/>
<feature type="chain" id="PRO_0000431934" description="AP-1-like transcription factor CAP1">
    <location>
        <begin position="1"/>
        <end position="499"/>
    </location>
</feature>
<feature type="domain" description="bZIP" evidence="4">
    <location>
        <begin position="40"/>
        <end position="103"/>
    </location>
</feature>
<feature type="region of interest" description="Disordered" evidence="5">
    <location>
        <begin position="1"/>
        <end position="64"/>
    </location>
</feature>
<feature type="region of interest" description="Basic motif" evidence="4">
    <location>
        <begin position="43"/>
        <end position="66"/>
    </location>
</feature>
<feature type="region of interest" description="Leucine-zipper" evidence="4">
    <location>
        <begin position="68"/>
        <end position="75"/>
    </location>
</feature>
<feature type="region of interest" description="Disordered" evidence="5">
    <location>
        <begin position="104"/>
        <end position="215"/>
    </location>
</feature>
<feature type="region of interest" description="n-CRD" evidence="1">
    <location>
        <begin position="254"/>
        <end position="261"/>
    </location>
</feature>
<feature type="region of interest" description="Disordered" evidence="5">
    <location>
        <begin position="408"/>
        <end position="442"/>
    </location>
</feature>
<feature type="region of interest" description="c-CRD" evidence="1">
    <location>
        <begin position="446"/>
        <end position="477"/>
    </location>
</feature>
<feature type="coiled-coil region" evidence="2">
    <location>
        <begin position="49"/>
        <end position="105"/>
    </location>
</feature>
<feature type="short sequence motif" description="Bipartite nuclear localization signal" evidence="3">
    <location>
        <begin position="20"/>
        <end position="27"/>
    </location>
</feature>
<feature type="short sequence motif" description="Bipartite nuclear localization signal" evidence="3">
    <location>
        <begin position="44"/>
        <end position="51"/>
    </location>
</feature>
<feature type="short sequence motif" description="Nuclear export signal" evidence="1">
    <location>
        <begin position="462"/>
        <end position="469"/>
    </location>
</feature>
<feature type="compositionally biased region" description="Polar residues" evidence="5">
    <location>
        <begin position="123"/>
        <end position="148"/>
    </location>
</feature>
<feature type="compositionally biased region" description="Low complexity" evidence="5">
    <location>
        <begin position="155"/>
        <end position="164"/>
    </location>
</feature>
<feature type="compositionally biased region" description="Low complexity" evidence="5">
    <location>
        <begin position="186"/>
        <end position="215"/>
    </location>
</feature>
<feature type="compositionally biased region" description="Low complexity" evidence="5">
    <location>
        <begin position="417"/>
        <end position="427"/>
    </location>
</feature>
<feature type="disulfide bond" description="In nuclear retained form" evidence="1">
    <location>
        <begin position="254"/>
        <end position="446"/>
    </location>
</feature>
<feature type="disulfide bond" description="In nuclear retained form" evidence="1">
    <location>
        <begin position="261"/>
        <end position="477"/>
    </location>
</feature>
<feature type="disulfide bond" description="Interchain (with C-43 in GPX3); transient" evidence="1">
    <location>
        <position position="446"/>
    </location>
</feature>
<feature type="mutagenesis site" description="Leads to hyper-activity and constitutive expression of MDR1." evidence="24 26 30">
    <location>
        <position position="333"/>
    </location>
</feature>
<feature type="mutagenesis site" description="Leads to constitutive nuclear localization." evidence="6">
    <original>C</original>
    <variation>A</variation>
    <location>
        <position position="477"/>
    </location>
</feature>
<organism>
    <name type="scientific">Candida albicans (strain SC5314 / ATCC MYA-2876)</name>
    <name type="common">Yeast</name>
    <dbReference type="NCBI Taxonomy" id="237561"/>
    <lineage>
        <taxon>Eukaryota</taxon>
        <taxon>Fungi</taxon>
        <taxon>Dikarya</taxon>
        <taxon>Ascomycota</taxon>
        <taxon>Saccharomycotina</taxon>
        <taxon>Pichiomycetes</taxon>
        <taxon>Debaryomycetaceae</taxon>
        <taxon>Candida/Lodderomyces clade</taxon>
        <taxon>Candida</taxon>
    </lineage>
</organism>
<reference key="1">
    <citation type="journal article" date="2004" name="Proc. Natl. Acad. Sci. U.S.A.">
        <title>The diploid genome sequence of Candida albicans.</title>
        <authorList>
            <person name="Jones T."/>
            <person name="Federspiel N.A."/>
            <person name="Chibana H."/>
            <person name="Dungan J."/>
            <person name="Kalman S."/>
            <person name="Magee B.B."/>
            <person name="Newport G."/>
            <person name="Thorstenson Y.R."/>
            <person name="Agabian N."/>
            <person name="Magee P.T."/>
            <person name="Davis R.W."/>
            <person name="Scherer S."/>
        </authorList>
    </citation>
    <scope>NUCLEOTIDE SEQUENCE [LARGE SCALE GENOMIC DNA]</scope>
    <source>
        <strain>SC5314 / ATCC MYA-2876</strain>
    </source>
</reference>
<reference key="2">
    <citation type="journal article" date="2007" name="Genome Biol.">
        <title>Assembly of the Candida albicans genome into sixteen supercontigs aligned on the eight chromosomes.</title>
        <authorList>
            <person name="van het Hoog M."/>
            <person name="Rast T.J."/>
            <person name="Martchenko M."/>
            <person name="Grindle S."/>
            <person name="Dignard D."/>
            <person name="Hogues H."/>
            <person name="Cuomo C."/>
            <person name="Berriman M."/>
            <person name="Scherer S."/>
            <person name="Magee B.B."/>
            <person name="Whiteway M."/>
            <person name="Chibana H."/>
            <person name="Nantel A."/>
            <person name="Magee P.T."/>
        </authorList>
    </citation>
    <scope>GENOME REANNOTATION</scope>
    <source>
        <strain>SC5314 / ATCC MYA-2876</strain>
    </source>
</reference>
<reference key="3">
    <citation type="journal article" date="2013" name="Genome Biol.">
        <title>Assembly of a phased diploid Candida albicans genome facilitates allele-specific measurements and provides a simple model for repeat and indel structure.</title>
        <authorList>
            <person name="Muzzey D."/>
            <person name="Schwartz K."/>
            <person name="Weissman J.S."/>
            <person name="Sherlock G."/>
        </authorList>
    </citation>
    <scope>NUCLEOTIDE SEQUENCE [LARGE SCALE GENOMIC DNA]</scope>
    <scope>GENOME REANNOTATION</scope>
    <source>
        <strain>SC5314 / ATCC MYA-2876</strain>
    </source>
</reference>
<reference key="4">
    <citation type="journal article" date="1997" name="J. Biol. Chem.">
        <title>AP1-mediated multidrug resistance in Saccharomyces cerevisiae requires FLR1 encoding a transporter of the major facilitator superfamily.</title>
        <authorList>
            <person name="Alarco A.-M."/>
            <person name="Balan I."/>
            <person name="Talibi D."/>
            <person name="Mainville N."/>
            <person name="Raymond M."/>
        </authorList>
    </citation>
    <scope>FUNCTION</scope>
</reference>
<reference key="5">
    <citation type="journal article" date="1999" name="J. Bacteriol.">
        <title>The bZip transcription factor Cap1p is involved in multidrug resistance and oxidative stress response in Candida albicans.</title>
        <authorList>
            <person name="Alarco A.M."/>
            <person name="Raymond M."/>
        </authorList>
    </citation>
    <scope>DNA-BINDING</scope>
    <scope>DISRUPTION PHENOTYPE</scope>
    <scope>FUNCTION</scope>
    <scope>SUBCELLULAR LOCATION</scope>
</reference>
<reference key="6">
    <citation type="journal article" date="2000" name="Mol. Microbiol.">
        <title>Analysis of the oxidative stress regulation of the Candida albicans transcription factor, Cap1p.</title>
        <authorList>
            <person name="Zhang X."/>
            <person name="De Micheli M."/>
            <person name="Coleman S.T."/>
            <person name="Sanglard D."/>
            <person name="Moye-Rowley W.S."/>
        </authorList>
    </citation>
    <scope>FUNCTION</scope>
    <scope>MUTAGENESIS OF CYS-477</scope>
</reference>
<reference key="7">
    <citation type="journal article" date="2003" name="Eukaryot. Cell">
        <title>The Hog1 mitogen-activated protein kinase is essential in the oxidative stress response and chlamydospore formation in Candida albicans.</title>
        <authorList>
            <person name="Alonso-Monge R."/>
            <person name="Navarro-Garcia F."/>
            <person name="Roman E."/>
            <person name="Negredo A.I."/>
            <person name="Eisman B."/>
            <person name="Nombela C."/>
            <person name="Pla J."/>
        </authorList>
    </citation>
    <scope>FUNCTION</scope>
    <scope>DISRUPTION PHENOTYPE</scope>
    <scope>SUBCELLULAR LOCATION</scope>
</reference>
<reference key="8">
    <citation type="journal article" date="2003" name="Mol. Biol. Cell">
        <title>Stress-induced gene expression in Candida albicans: absence of a general stress response.</title>
        <authorList>
            <person name="Enjalbert B."/>
            <person name="Nantel A."/>
            <person name="Whiteway M."/>
        </authorList>
    </citation>
    <scope>INDUCTION</scope>
</reference>
<reference key="9">
    <citation type="journal article" date="2005" name="Eukaryot. Cell">
        <title>Identification and characterization of Cor33p, a novel protein implicated in tolerance towards oxidative stress in Candida albicans.</title>
        <authorList>
            <person name="Sohn K."/>
            <person name="Roehm M."/>
            <person name="Urban C."/>
            <person name="Saunders N."/>
            <person name="Rothenstein D."/>
            <person name="Lottspeich F."/>
            <person name="Schroppel K."/>
            <person name="Brunner H."/>
            <person name="Rupp S."/>
        </authorList>
    </citation>
    <scope>FUNCTION</scope>
    <scope>DISRUPTION PHENOTYPE</scope>
</reference>
<reference key="10">
    <citation type="journal article" date="2005" name="Mol. Microbiol.">
        <title>Granulocytes govern the transcriptional response, morphology and proliferation of Candida albicans in human blood.</title>
        <authorList>
            <person name="Fradin C."/>
            <person name="De Groot P."/>
            <person name="MacCallum D."/>
            <person name="Schaller M."/>
            <person name="Klis F."/>
            <person name="Odds F.C."/>
            <person name="Hube B."/>
        </authorList>
    </citation>
    <scope>INDUCTION</scope>
    <scope>DISRUPTION PHENOTYPE</scope>
</reference>
<reference key="11">
    <citation type="journal article" date="2005" name="Mol. Microbiol.">
        <title>The moonlighting protein Tsa1p is implicated in oxidative stress response and in cell wall biogenesis in Candida albicans.</title>
        <authorList>
            <person name="Urban C."/>
            <person name="Xiong X."/>
            <person name="Sohn K."/>
            <person name="Schroppel K."/>
            <person name="Brunner H."/>
            <person name="Rupp S."/>
        </authorList>
    </citation>
    <scope>FUNCTION</scope>
    <scope>DISRUPTION PHENOTYPE</scope>
</reference>
<reference key="12">
    <citation type="journal article" date="2006" name="Microbiology">
        <title>Identification of promoter elements responsible for the regulation of MDR1 from Candida albicans, a major facilitator transporter involved in azole resistance.</title>
        <authorList>
            <person name="Rognon B."/>
            <person name="Kozovska Z."/>
            <person name="Coste A.T."/>
            <person name="Pardini G."/>
            <person name="Sanglard D."/>
        </authorList>
    </citation>
    <scope>FUNCTION</scope>
</reference>
<reference key="13">
    <citation type="journal article" date="2006" name="Free Radic. Biol. Med.">
        <title>Cap1p is involved in multiple pathways of oxidative stress response in Candida albicans.</title>
        <authorList>
            <person name="Wang Y."/>
            <person name="Cao Y.Y."/>
            <person name="Jia X.M."/>
            <person name="Cao Y.B."/>
            <person name="Gao P.H."/>
            <person name="Fu X.P."/>
            <person name="Ying K."/>
            <person name="Chen W.S."/>
            <person name="Jiang Y.Y."/>
        </authorList>
    </citation>
    <scope>FUNCTION</scope>
</reference>
<reference key="14">
    <citation type="journal article" date="2007" name="Front. Biosci.">
        <title>Cap1p plays regulation roles in redox, energy metabolism and substance transport: an investigation on Candida albicans under normal culture condition.</title>
        <authorList>
            <person name="Wang Y."/>
            <person name="Cao Y.Y."/>
            <person name="Cao Y.B."/>
            <person name="Wang D.J."/>
            <person name="Jia X.M."/>
            <person name="Fu X.P."/>
            <person name="Zhang J.D."/>
            <person name="Xu Z."/>
            <person name="Ying K."/>
            <person name="Chen W.S."/>
            <person name="Jiang Y.Y."/>
        </authorList>
    </citation>
    <scope>FUNCTION</scope>
    <scope>DISRUPTION PHENOTYPE</scope>
</reference>
<reference key="15">
    <citation type="journal article" date="2008" name="Biol. Pharm. Bull.">
        <title>Trehalose is an important mediator of Cap1p oxidative stress response in Candida albicans.</title>
        <authorList>
            <person name="Cao Y."/>
            <person name="Wang Y."/>
            <person name="Dai B."/>
            <person name="Wang B."/>
            <person name="Zhang H."/>
            <person name="Zhu Z."/>
            <person name="Xu Y."/>
            <person name="Cao Y."/>
            <person name="Jiang Y."/>
            <person name="Zhang G."/>
        </authorList>
    </citation>
    <scope>FUNCTION</scope>
    <scope>DISRUPTION PHENOTYPE</scope>
</reference>
<reference key="16">
    <citation type="journal article" date="2009" name="Eukaryot. Cell">
        <title>Identification of the Candida albicans Cap1p regulon.</title>
        <authorList>
            <person name="Znaidi S."/>
            <person name="Barker K.S."/>
            <person name="Weber S."/>
            <person name="Alarco A.M."/>
            <person name="Liu T.T."/>
            <person name="Boucher G."/>
            <person name="Rogers P.D."/>
            <person name="Raymond M."/>
        </authorList>
    </citation>
    <scope>FUNCTION</scope>
    <scope>PROMOTER-BINDING</scope>
</reference>
<reference key="17">
    <citation type="journal article" date="2009" name="J. Microbiol. Biotechnol.">
        <title>Baicalein induces programmed cell death in Candida albicans.</title>
        <authorList>
            <person name="Dai B.D."/>
            <person name="Cao Y.Y."/>
            <person name="Huang S."/>
            <person name="Xu Y.G."/>
            <person name="Gao P.H."/>
            <person name="Wang Y."/>
            <person name="Jiang Y.Y."/>
        </authorList>
    </citation>
    <scope>INDUCTION</scope>
    <scope>DISRUPTION PHENOTYPE</scope>
    <scope>FUNCTION</scope>
</reference>
<reference key="18">
    <citation type="journal article" date="2009" name="Med. Mycol.">
        <title>Exposure to caspofungin activates Cap and Hog pathways in Candida albicans.</title>
        <authorList>
            <person name="Kelly J."/>
            <person name="Rowan R."/>
            <person name="McCann M."/>
            <person name="Kavanagh K."/>
        </authorList>
    </citation>
    <scope>SUBCELLULAR LOCATION</scope>
</reference>
<reference key="19">
    <citation type="journal article" date="2009" name="Microbiology">
        <title>The Hog1 MAP kinase controls respiratory metabolism in the fungal pathogen Candida albicans.</title>
        <authorList>
            <person name="Alonso-Monge R."/>
            <person name="Carvaihlo S."/>
            <person name="Nombela C."/>
            <person name="Rial E."/>
            <person name="Pla J."/>
        </authorList>
    </citation>
    <scope>FUNCTION</scope>
    <scope>DISRUPTION PHENOTYPE</scope>
</reference>
<reference key="20">
    <citation type="journal article" date="2009" name="Mol. Biol. Cell">
        <title>Genome-wide mapping of the coactivator Ada2p yields insight into the functional roles of SAGA/ADA complex in Candida albicans.</title>
        <authorList>
            <person name="Sellam A."/>
            <person name="Askew C."/>
            <person name="Epp E."/>
            <person name="Lavoie H."/>
            <person name="Whiteway M."/>
            <person name="Nantel A."/>
        </authorList>
    </citation>
    <scope>FUNCTION</scope>
</reference>
<reference key="21">
    <citation type="journal article" date="2009" name="Mol. Biol. Cell">
        <title>Glucose promotes stress resistance in the fungal pathogen Candida albicans.</title>
        <authorList>
            <person name="Rodaki A."/>
            <person name="Bohovych I.M."/>
            <person name="Enjalbert B."/>
            <person name="Young T."/>
            <person name="Odds F.C."/>
            <person name="Gow N.A."/>
            <person name="Brown A.J."/>
        </authorList>
    </citation>
    <scope>FUNCTION</scope>
</reference>
<reference key="22">
    <citation type="journal article" date="2010" name="FEMS Yeast Res.">
        <title>Expression of Candida albicans glutathione transferases is induced inside phagocytes and upon diverse environmental stresses.</title>
        <authorList>
            <person name="Garcera A."/>
            <person name="Casas C."/>
            <person name="Herrero E."/>
        </authorList>
    </citation>
    <scope>FUNCTION</scope>
    <scope>DISRUPTION PHENOTYPE</scope>
</reference>
<reference key="23">
    <citation type="journal article" date="2010" name="Mol. Cell. Biol.">
        <title>Thioredoxin regulates multiple hydrogen peroxide-induced signaling pathways in Candida albicans.</title>
        <authorList>
            <person name="da Silva Dantas A."/>
            <person name="Patterson M.J."/>
            <person name="Smith D.A."/>
            <person name="Maccallum D.M."/>
            <person name="Erwig L.P."/>
            <person name="Morgan B.A."/>
            <person name="Quinn J."/>
        </authorList>
    </citation>
    <scope>FUNCTION</scope>
    <scope>SUBCELLULAR LOCATION</scope>
    <scope>OXIDATION STATE</scope>
    <scope>INDUCTION</scope>
</reference>
<reference key="24">
    <citation type="journal article" date="2011" name="Antimicrob. Agents Chemother.">
        <title>Differential requirement of the transcription factor Mcm1 for activation of the Candida albicans multidrug efflux pump MDR1 by its regulators Mrr1 and Cap1.</title>
        <authorList>
            <person name="Mogavero S."/>
            <person name="Tavanti A."/>
            <person name="Senesi S."/>
            <person name="Rogers P.D."/>
            <person name="Morschhaeuser J."/>
        </authorList>
    </citation>
    <scope>FUNCTION</scope>
    <scope>MUTAGENESIS OF CYS-333</scope>
</reference>
<reference key="25">
    <citation type="journal article" date="2011" name="Antimicrob. Agents Chemother.">
        <title>Regulation of efflux pump expression and drug resistance by the transcription factors Mrr1, Upc2, and Cap1 in Candida albicans.</title>
        <authorList>
            <person name="Schubert S."/>
            <person name="Barker K.S."/>
            <person name="Znaidi S."/>
            <person name="Schneider S."/>
            <person name="Dierolf F."/>
            <person name="Dunkel N."/>
            <person name="Aid M."/>
            <person name="Boucher G."/>
            <person name="Rogers P.D."/>
            <person name="Raymond M."/>
            <person name="Morschhaeuser J."/>
        </authorList>
    </citation>
    <scope>FUNCTION</scope>
    <scope>DISRUPTION PHENOTYPE</scope>
</reference>
<reference key="26">
    <citation type="journal article" date="2012" name="Antimicrob. Agents Chemother.">
        <title>Inducible and constitutive activation of two polymorphic promoter alleles of the Candida albicans multidrug efflux pump MDR1.</title>
        <authorList>
            <person name="Sasse C."/>
            <person name="Schillig R."/>
            <person name="Reimund A."/>
            <person name="Merk J."/>
            <person name="Morschhauser J."/>
        </authorList>
    </citation>
    <scope>FUNCTION</scope>
    <scope>MUTAGENESIS OF CYS-333</scope>
</reference>
<reference key="27">
    <citation type="journal article" date="2013" name="Antioxid. Redox Signal.">
        <title>Ybp1 and Gpx3 signaling in Candida albicans govern hydrogen peroxide-induced oxidation of the Cap1 transcription factor and macrophage escape.</title>
        <authorList>
            <person name="Patterson M.J."/>
            <person name="McKenzie C.G."/>
            <person name="Smith D.A."/>
            <person name="da Silva Dantas A."/>
            <person name="Sherston S."/>
            <person name="Veal E.A."/>
            <person name="Morgan B.A."/>
            <person name="MacCallum D.M."/>
            <person name="Erwig L.P."/>
            <person name="Quinn J."/>
        </authorList>
    </citation>
    <scope>FUNCTION</scope>
    <scope>OXIDATION</scope>
    <scope>PHOSPHORYLATION</scope>
    <scope>SUBCELLULAR LOCATION</scope>
    <scope>INTERACTION WITH YBP1</scope>
</reference>
<reference key="28">
    <citation type="journal article" date="2013" name="FEBS J.">
        <title>Cap1p attenuates the apoptosis of Candida albicans.</title>
        <authorList>
            <person name="Dai B.D."/>
            <person name="Wang Y."/>
            <person name="Zhao L.X."/>
            <person name="Li D.D."/>
            <person name="Li M.B."/>
            <person name="Cao Y.B."/>
            <person name="Jiang Y.Y."/>
        </authorList>
    </citation>
    <scope>FUNCTION</scope>
    <scope>DISRUPTION PHENOTYPE</scope>
</reference>
<reference key="29">
    <citation type="journal article" date="2013" name="Virulence">
        <title>The role of Candida albicans AP-1 protein against host derived ROS in in vivo models of infection.</title>
        <authorList>
            <person name="Jain C."/>
            <person name="Pastor K."/>
            <person name="Gonzalez A.Y."/>
            <person name="Lorenz M.C."/>
            <person name="Rao R.P."/>
        </authorList>
    </citation>
    <scope>FUNCTION</scope>
    <scope>DISRUPTION PHENOTYPE</scope>
</reference>
<reference key="30">
    <citation type="journal article" date="2014" name="Antimicrob. Agents Chemother.">
        <title>SAGA/ADA complex subunit Ada2 is required for Cap1- but not Mrr1-mediated upregulation of the Candida albicans multidrug efflux pump MDR1.</title>
        <authorList>
            <person name="Ramirez-Zavala B."/>
            <person name="Mogavero S."/>
            <person name="Schoeller E."/>
            <person name="Sasse C."/>
            <person name="Rogers P.D."/>
            <person name="Morschhaeuser J."/>
        </authorList>
    </citation>
    <scope>FUNCTION</scope>
    <scope>MUTAGENESIS OF CYS-333</scope>
</reference>
<reference key="31">
    <citation type="journal article" date="2014" name="MBio">
        <title>Mechanisms underlying the exquisite sensitivity of Candida albicans to combinatorial cationic and oxidative stress that enhances the potent fungicidal activity of phagocytes.</title>
        <authorList>
            <person name="Kaloriti D."/>
            <person name="Jacobsen M."/>
            <person name="Yin Z."/>
            <person name="Patterson M."/>
            <person name="Tillmann A."/>
            <person name="Smith D.A."/>
            <person name="Cook E."/>
            <person name="You T."/>
            <person name="Grimm M.J."/>
            <person name="Bohovych I."/>
            <person name="Grebogi C."/>
            <person name="Segal B.H."/>
            <person name="Gow N.A."/>
            <person name="Haynes K."/>
            <person name="Quinn J."/>
            <person name="Brown A.J."/>
        </authorList>
    </citation>
    <scope>FUNCTION</scope>
    <scope>SUBCELLULAR LOCATION</scope>
</reference>
<accession>Q5AJU7</accession>
<accession>A0A1D8PJE9</accession>
<accession>G1UB70</accession>
<protein>
    <recommendedName>
        <fullName evidence="34">AP-1-like transcription factor CAP1</fullName>
    </recommendedName>
</protein>
<keyword id="KW-0175">Coiled coil</keyword>
<keyword id="KW-0963">Cytoplasm</keyword>
<keyword id="KW-1015">Disulfide bond</keyword>
<keyword id="KW-0238">DNA-binding</keyword>
<keyword id="KW-0539">Nucleus</keyword>
<keyword id="KW-0558">Oxidation</keyword>
<keyword id="KW-0597">Phosphoprotein</keyword>
<keyword id="KW-1185">Reference proteome</keyword>
<keyword id="KW-0346">Stress response</keyword>
<keyword id="KW-0804">Transcription</keyword>
<keyword id="KW-0805">Transcription regulation</keyword>
<keyword id="KW-0843">Virulence</keyword>
<comment type="function">
    <text evidence="6 7 10 11 12 13 14 15 16 17 18 19 20 22 23 24 25 26 27 28 29 30 31 32 33">Transcription activator involved in multidrug resistance, oxidative stress response, and redox homeostasis. Preferentially binds to promoters with the core binding site 5'-TTA[CG]TAA-3'. Involved in the oxidative stress response in via multiple pathways, including the cellular antioxidant defense system, carbohydrate metabolism and energy metabolism, protein degradation, ATP-dependent RNA helicase, and resistance pathways. The ability of the major systemic fungal pathogen of humans to sense and respond to reactive oxygen species, such as H(2)O(2) generated by the host immune system, is required for survival in the host and therefore virulence. Regulates the transcription of COR33, GLR1, GTO1, GTT1, GTT1, TRR1, TRX1, SOD1, CAT1, and the transcription regulator TSA1. Participates in the apoptosis by regulating the expression of the glutathione reductase gene and glutathione content. Also plays a role in the peroxide-mediated induction of MDR1 and other drug response genes such as PDR16, MDR1, FLU1, YCF1, and FCR1. Regulates trehalose accumulation which is important for the oxidative stress tolerance. Recruits ADA2 to its target promoters. Activity of CAP1 is controlled through oxidation of specific cysteine residues resulting in the alteration of its subcellular location. Oxidative stress induces nuclear accumulation and as a result CAP1 transcriptional activity. Nuclear export is restored when disulfide bonds are reduced by thioredoxin, whose expression is controlled by CAP1, providing a mechanism for negative autoregulation.</text>
</comment>
<comment type="subunit">
    <text evidence="29">Interacts with YBP1.</text>
</comment>
<comment type="subcellular location">
    <subcellularLocation>
        <location evidence="6 7 21 23 29 31">Nucleus</location>
    </subcellularLocation>
    <subcellularLocation>
        <location evidence="6 7 21 23 29 31">Cytoplasm</location>
    </subcellularLocation>
    <text evidence="6 7 21 23 29 31">Oxidized CAP1 is found predominantly in the nucleus, while reduced CAP1 is continuously exported to the cytoplasm. Caspofungin treatment also induces nuclear translocation.</text>
</comment>
<comment type="induction">
    <text evidence="8 9 19 23">Induced by oxidative stress and during contact with neutrophils. Expression is also up-regulated by the thioredoxin TRX1 and by treatment with Chinese herbal medicine baicalein.</text>
</comment>
<comment type="domain">
    <text evidence="1">Contains two cysteine rich domains (CRD), referred to as the N- and C-terminal CRD's, n-CRD (Cys-254 and Cys-261) and c-CRD (Cys-446, Cys-468 and Cys-477), respectively. A nuclear export signal is embedded in the c-CRD, with which the nuclear export protein CRM1/exportin 1 interacts only in the absence of disulfide bonds (or otherwise oxidized cysteines) within the c-CRD or between the c-CRD and the n-CRD.</text>
</comment>
<comment type="PTM">
    <text evidence="1 23 29">Upon oxidative stress, is oxidated by the peroxidase GPX3 and stabilized by YBP1 (PubMed:20679492, PubMed:23706023). Oxidative stress induces conformational changes through oxidation of cysteine residues, masking the nuclear export signal, thus abolishing nuclear export by CRM1/exportin 1 (By similarity).</text>
</comment>
<comment type="PTM">
    <text evidence="29">Phosphorylated in response to H(2)O(2).</text>
</comment>
<comment type="disruption phenotype">
    <text evidence="7 9 10 11 13 15 16 19 22 25 27 28 33">Causes hypersensitivity to cadmium, 4-nitroquinoline N-oxide, 1,10-phenanthroline, and hydrogen peroxide. Abolishes the peroxide-mediated induction of COR33, TSA1, and many other genes involved in oxidative stress response. Inhibits trehalose accumulation upon exposure to oxidative stress. Shows significantly reduced viability when exposed to whole blood or polymorphonuclear cells, as well as to the Chinese herbal medicine baicalein. Also leads to decreased virulence in a Caenorhabditis elegans model. Increases apoptosis upon apoptotic stimulation.</text>
</comment>
<comment type="similarity">
    <text evidence="35">Belongs to the bZIP family. YAP subfamily.</text>
</comment>
<name>AP1_CANAL</name>
<evidence type="ECO:0000250" key="1">
    <source>
        <dbReference type="UniProtKB" id="P19880"/>
    </source>
</evidence>
<evidence type="ECO:0000255" key="2"/>
<evidence type="ECO:0000255" key="3">
    <source>
        <dbReference type="PROSITE-ProRule" id="PRU00768"/>
    </source>
</evidence>
<evidence type="ECO:0000255" key="4">
    <source>
        <dbReference type="PROSITE-ProRule" id="PRU00978"/>
    </source>
</evidence>
<evidence type="ECO:0000256" key="5">
    <source>
        <dbReference type="SAM" id="MobiDB-lite"/>
    </source>
</evidence>
<evidence type="ECO:0000269" key="6">
    <source>
    </source>
</evidence>
<evidence type="ECO:0000269" key="7">
    <source>
    </source>
</evidence>
<evidence type="ECO:0000269" key="8">
    <source>
    </source>
</evidence>
<evidence type="ECO:0000269" key="9">
    <source>
    </source>
</evidence>
<evidence type="ECO:0000269" key="10">
    <source>
    </source>
</evidence>
<evidence type="ECO:0000269" key="11">
    <source>
    </source>
</evidence>
<evidence type="ECO:0000269" key="12">
    <source>
    </source>
</evidence>
<evidence type="ECO:0000269" key="13">
    <source>
    </source>
</evidence>
<evidence type="ECO:0000269" key="14">
    <source>
    </source>
</evidence>
<evidence type="ECO:0000269" key="15">
    <source>
    </source>
</evidence>
<evidence type="ECO:0000269" key="16">
    <source>
    </source>
</evidence>
<evidence type="ECO:0000269" key="17">
    <source>
    </source>
</evidence>
<evidence type="ECO:0000269" key="18">
    <source>
    </source>
</evidence>
<evidence type="ECO:0000269" key="19">
    <source>
    </source>
</evidence>
<evidence type="ECO:0000269" key="20">
    <source>
    </source>
</evidence>
<evidence type="ECO:0000269" key="21">
    <source>
    </source>
</evidence>
<evidence type="ECO:0000269" key="22">
    <source>
    </source>
</evidence>
<evidence type="ECO:0000269" key="23">
    <source>
    </source>
</evidence>
<evidence type="ECO:0000269" key="24">
    <source>
    </source>
</evidence>
<evidence type="ECO:0000269" key="25">
    <source>
    </source>
</evidence>
<evidence type="ECO:0000269" key="26">
    <source>
    </source>
</evidence>
<evidence type="ECO:0000269" key="27">
    <source>
    </source>
</evidence>
<evidence type="ECO:0000269" key="28">
    <source>
    </source>
</evidence>
<evidence type="ECO:0000269" key="29">
    <source>
    </source>
</evidence>
<evidence type="ECO:0000269" key="30">
    <source>
    </source>
</evidence>
<evidence type="ECO:0000269" key="31">
    <source>
    </source>
</evidence>
<evidence type="ECO:0000269" key="32">
    <source>
    </source>
</evidence>
<evidence type="ECO:0000269" key="33">
    <source>
    </source>
</evidence>
<evidence type="ECO:0000303" key="34">
    <source>
    </source>
</evidence>
<evidence type="ECO:0000305" key="35"/>
<sequence length="499" mass="54998">MTDIKRNFSDIASPANLDDTKKLHVDSTATTKVGRKPIDTEPKSKRTAQNRAAQRAYRERKERKMKELEDKVRLLEDANVRALTETDFLRAQVDVLKNELAKYTGGSDFSDLNLPTKVGHLSHPNNHHSNVSTGTPHGSMSSSNSVASLDNDKPSSASSVSNNSPGFAFDNPWSKDNIQKLKHQHQQQQQKVPQGVPDLVSGSSSSSTPLNDNLLVTPESLTGLSTSSKYTGQNNVPTNLDFTNQFDEQVDPFCVKLNEACGTKSNPVPKFKRSGSKANTSVTNNSPLAHLVSPESQQYTNSSNIDFMNDPFFNGVGTDYNFNFDSKNGSIQDPLSFLQDDNFDLALAFGDPSPTGNEAEADPISLLTTEESIYDPLTNNSDKLCSTVKADDVNTDFNFNDFVKNSLPEKQEKGKYEPPSTSKTTNNNEEEDKDEVVPAPPQTLKCSEIWDRITSHPKYTELDIDGLCNELKSKAKCSEKGVVINTADVNQLLERSIKH</sequence>